<keyword id="KW-0963">Cytoplasm</keyword>
<keyword id="KW-0255">Endonuclease</keyword>
<keyword id="KW-0378">Hydrolase</keyword>
<keyword id="KW-0479">Metal-binding</keyword>
<keyword id="KW-0540">Nuclease</keyword>
<keyword id="KW-0819">tRNA processing</keyword>
<keyword id="KW-0862">Zinc</keyword>
<accession>Q46D07</accession>
<protein>
    <recommendedName>
        <fullName evidence="1">Ribonuclease P protein component 4</fullName>
        <shortName evidence="1">RNase P component 4</shortName>
        <ecNumber evidence="1">3.1.26.5</ecNumber>
    </recommendedName>
    <alternativeName>
        <fullName evidence="1">Rpp21</fullName>
    </alternativeName>
</protein>
<comment type="function">
    <text evidence="1">Part of ribonuclease P, a protein complex that generates mature tRNA molecules by cleaving their 5'-ends.</text>
</comment>
<comment type="catalytic activity">
    <reaction evidence="1">
        <text>Endonucleolytic cleavage of RNA, removing 5'-extranucleotides from tRNA precursor.</text>
        <dbReference type="EC" id="3.1.26.5"/>
    </reaction>
</comment>
<comment type="cofactor">
    <cofactor evidence="1">
        <name>Zn(2+)</name>
        <dbReference type="ChEBI" id="CHEBI:29105"/>
    </cofactor>
    <text evidence="1">Binds 1 zinc ion per subunit.</text>
</comment>
<comment type="subunit">
    <text evidence="1">Consists of a catalytic RNA component and at least 4-5 protein subunits.</text>
</comment>
<comment type="subcellular location">
    <subcellularLocation>
        <location evidence="1">Cytoplasm</location>
    </subcellularLocation>
</comment>
<comment type="similarity">
    <text evidence="1">Belongs to the eukaryotic/archaeal RNase P protein component 4 family.</text>
</comment>
<gene>
    <name evidence="1" type="primary">rnp4</name>
    <name type="ordered locus">Mbar_A1272</name>
</gene>
<feature type="chain" id="PRO_1000046631" description="Ribonuclease P protein component 4">
    <location>
        <begin position="1"/>
        <end position="107"/>
    </location>
</feature>
<feature type="binding site" evidence="1">
    <location>
        <position position="66"/>
    </location>
    <ligand>
        <name>Zn(2+)</name>
        <dbReference type="ChEBI" id="CHEBI:29105"/>
    </ligand>
</feature>
<feature type="binding site" evidence="1">
    <location>
        <position position="69"/>
    </location>
    <ligand>
        <name>Zn(2+)</name>
        <dbReference type="ChEBI" id="CHEBI:29105"/>
    </ligand>
</feature>
<feature type="binding site" evidence="1">
    <location>
        <position position="92"/>
    </location>
    <ligand>
        <name>Zn(2+)</name>
        <dbReference type="ChEBI" id="CHEBI:29105"/>
    </ligand>
</feature>
<feature type="binding site" evidence="1">
    <location>
        <position position="95"/>
    </location>
    <ligand>
        <name>Zn(2+)</name>
        <dbReference type="ChEBI" id="CHEBI:29105"/>
    </ligand>
</feature>
<sequence length="107" mass="12966">MSRIARKQQKNLIQAIAIQRMWRLFELAKSEYAEHPDRSERYVQLIRNISMRNRMSIPREIKNRICKHCYAFLVPGNNARYRLKDGYIVVSCQRCGKEMRYPYKKLK</sequence>
<organism>
    <name type="scientific">Methanosarcina barkeri (strain Fusaro / DSM 804)</name>
    <dbReference type="NCBI Taxonomy" id="269797"/>
    <lineage>
        <taxon>Archaea</taxon>
        <taxon>Methanobacteriati</taxon>
        <taxon>Methanobacteriota</taxon>
        <taxon>Stenosarchaea group</taxon>
        <taxon>Methanomicrobia</taxon>
        <taxon>Methanosarcinales</taxon>
        <taxon>Methanosarcinaceae</taxon>
        <taxon>Methanosarcina</taxon>
    </lineage>
</organism>
<name>RNP4_METBF</name>
<proteinExistence type="inferred from homology"/>
<dbReference type="EC" id="3.1.26.5" evidence="1"/>
<dbReference type="EMBL" id="CP000099">
    <property type="protein sequence ID" value="AAZ70235.1"/>
    <property type="molecule type" value="Genomic_DNA"/>
</dbReference>
<dbReference type="SMR" id="Q46D07"/>
<dbReference type="STRING" id="269797.Mbar_A1272"/>
<dbReference type="PaxDb" id="269797-Mbar_A1272"/>
<dbReference type="KEGG" id="mba:Mbar_A1272"/>
<dbReference type="eggNOG" id="arCOG04345">
    <property type="taxonomic scope" value="Archaea"/>
</dbReference>
<dbReference type="HOGENOM" id="CLU_079140_3_0_2"/>
<dbReference type="OrthoDB" id="10058at2157"/>
<dbReference type="GO" id="GO:0005737">
    <property type="term" value="C:cytoplasm"/>
    <property type="evidence" value="ECO:0007669"/>
    <property type="project" value="UniProtKB-SubCell"/>
</dbReference>
<dbReference type="GO" id="GO:0030677">
    <property type="term" value="C:ribonuclease P complex"/>
    <property type="evidence" value="ECO:0007669"/>
    <property type="project" value="UniProtKB-UniRule"/>
</dbReference>
<dbReference type="GO" id="GO:0004526">
    <property type="term" value="F:ribonuclease P activity"/>
    <property type="evidence" value="ECO:0007669"/>
    <property type="project" value="UniProtKB-UniRule"/>
</dbReference>
<dbReference type="GO" id="GO:0008270">
    <property type="term" value="F:zinc ion binding"/>
    <property type="evidence" value="ECO:0007669"/>
    <property type="project" value="UniProtKB-UniRule"/>
</dbReference>
<dbReference type="GO" id="GO:0001682">
    <property type="term" value="P:tRNA 5'-leader removal"/>
    <property type="evidence" value="ECO:0007669"/>
    <property type="project" value="UniProtKB-UniRule"/>
</dbReference>
<dbReference type="Gene3D" id="6.20.50.20">
    <property type="match status" value="1"/>
</dbReference>
<dbReference type="Gene3D" id="1.20.5.420">
    <property type="entry name" value="Immunoglobulin FC, subunit C"/>
    <property type="match status" value="1"/>
</dbReference>
<dbReference type="HAMAP" id="MF_00757">
    <property type="entry name" value="RNase_P_4"/>
    <property type="match status" value="1"/>
</dbReference>
<dbReference type="InterPro" id="IPR016432">
    <property type="entry name" value="RNP4"/>
</dbReference>
<dbReference type="InterPro" id="IPR007175">
    <property type="entry name" value="Rpr2/Snm1/Rpp21"/>
</dbReference>
<dbReference type="PANTHER" id="PTHR14742:SF0">
    <property type="entry name" value="RIBONUCLEASE P PROTEIN SUBUNIT P21"/>
    <property type="match status" value="1"/>
</dbReference>
<dbReference type="PANTHER" id="PTHR14742">
    <property type="entry name" value="RIBONUCLEASE P SUBUNIT P21"/>
    <property type="match status" value="1"/>
</dbReference>
<dbReference type="Pfam" id="PF04032">
    <property type="entry name" value="Rpr2"/>
    <property type="match status" value="1"/>
</dbReference>
<dbReference type="PIRSF" id="PIRSF004878">
    <property type="entry name" value="RNase_P_4"/>
    <property type="match status" value="1"/>
</dbReference>
<reference key="1">
    <citation type="journal article" date="2006" name="J. Bacteriol.">
        <title>The Methanosarcina barkeri genome: comparative analysis with Methanosarcina acetivorans and Methanosarcina mazei reveals extensive rearrangement within methanosarcinal genomes.</title>
        <authorList>
            <person name="Maeder D.L."/>
            <person name="Anderson I."/>
            <person name="Brettin T.S."/>
            <person name="Bruce D.C."/>
            <person name="Gilna P."/>
            <person name="Han C.S."/>
            <person name="Lapidus A."/>
            <person name="Metcalf W.W."/>
            <person name="Saunders E."/>
            <person name="Tapia R."/>
            <person name="Sowers K.R."/>
        </authorList>
    </citation>
    <scope>NUCLEOTIDE SEQUENCE [LARGE SCALE GENOMIC DNA]</scope>
    <source>
        <strain>Fusaro / DSM 804</strain>
    </source>
</reference>
<evidence type="ECO:0000255" key="1">
    <source>
        <dbReference type="HAMAP-Rule" id="MF_00757"/>
    </source>
</evidence>